<comment type="function">
    <text evidence="1">Involved in the biosynthesis of the central metabolite phospho-alpha-D-ribosyl-1-pyrophosphate (PRPP) via the transfer of pyrophosphoryl group from ATP to 1-hydroxyl of ribose-5-phosphate (Rib-5-P).</text>
</comment>
<comment type="catalytic activity">
    <reaction evidence="1">
        <text>D-ribose 5-phosphate + ATP = 5-phospho-alpha-D-ribose 1-diphosphate + AMP + H(+)</text>
        <dbReference type="Rhea" id="RHEA:15609"/>
        <dbReference type="ChEBI" id="CHEBI:15378"/>
        <dbReference type="ChEBI" id="CHEBI:30616"/>
        <dbReference type="ChEBI" id="CHEBI:58017"/>
        <dbReference type="ChEBI" id="CHEBI:78346"/>
        <dbReference type="ChEBI" id="CHEBI:456215"/>
        <dbReference type="EC" id="2.7.6.1"/>
    </reaction>
</comment>
<comment type="cofactor">
    <cofactor evidence="1">
        <name>Mg(2+)</name>
        <dbReference type="ChEBI" id="CHEBI:18420"/>
    </cofactor>
    <text evidence="1">Binds 2 Mg(2+) ions per subunit.</text>
</comment>
<comment type="pathway">
    <text evidence="1">Metabolic intermediate biosynthesis; 5-phospho-alpha-D-ribose 1-diphosphate biosynthesis; 5-phospho-alpha-D-ribose 1-diphosphate from D-ribose 5-phosphate (route I): step 1/1.</text>
</comment>
<comment type="subunit">
    <text evidence="1">Homohexamer.</text>
</comment>
<comment type="subcellular location">
    <subcellularLocation>
        <location evidence="1">Cytoplasm</location>
    </subcellularLocation>
</comment>
<comment type="similarity">
    <text evidence="1">Belongs to the ribose-phosphate pyrophosphokinase family. Class I subfamily.</text>
</comment>
<protein>
    <recommendedName>
        <fullName evidence="1">Ribose-phosphate pyrophosphokinase</fullName>
        <shortName evidence="1">RPPK</shortName>
        <ecNumber evidence="1">2.7.6.1</ecNumber>
    </recommendedName>
    <alternativeName>
        <fullName evidence="1">5-phospho-D-ribosyl alpha-1-diphosphate synthase</fullName>
    </alternativeName>
    <alternativeName>
        <fullName evidence="1">Phosphoribosyl diphosphate synthase</fullName>
    </alternativeName>
    <alternativeName>
        <fullName evidence="1">Phosphoribosyl pyrophosphate synthase</fullName>
        <shortName evidence="1">P-Rib-PP synthase</shortName>
        <shortName evidence="1">PRPP synthase</shortName>
        <shortName evidence="1">PRPPase</shortName>
    </alternativeName>
</protein>
<dbReference type="EC" id="2.7.6.1" evidence="1"/>
<dbReference type="EMBL" id="BA000037">
    <property type="protein sequence ID" value="BAC93690.1"/>
    <property type="molecule type" value="Genomic_DNA"/>
</dbReference>
<dbReference type="RefSeq" id="WP_011078371.1">
    <property type="nucleotide sequence ID" value="NC_005139.1"/>
</dbReference>
<dbReference type="SMR" id="Q7MMZ1"/>
<dbReference type="STRING" id="672.VV93_v1c08580"/>
<dbReference type="KEGG" id="vvy:VV0926"/>
<dbReference type="eggNOG" id="COG0462">
    <property type="taxonomic scope" value="Bacteria"/>
</dbReference>
<dbReference type="HOGENOM" id="CLU_033546_2_0_6"/>
<dbReference type="UniPathway" id="UPA00087">
    <property type="reaction ID" value="UER00172"/>
</dbReference>
<dbReference type="Proteomes" id="UP000002675">
    <property type="component" value="Chromosome I"/>
</dbReference>
<dbReference type="GO" id="GO:0005737">
    <property type="term" value="C:cytoplasm"/>
    <property type="evidence" value="ECO:0007669"/>
    <property type="project" value="UniProtKB-SubCell"/>
</dbReference>
<dbReference type="GO" id="GO:0002189">
    <property type="term" value="C:ribose phosphate diphosphokinase complex"/>
    <property type="evidence" value="ECO:0007669"/>
    <property type="project" value="TreeGrafter"/>
</dbReference>
<dbReference type="GO" id="GO:0005524">
    <property type="term" value="F:ATP binding"/>
    <property type="evidence" value="ECO:0007669"/>
    <property type="project" value="UniProtKB-KW"/>
</dbReference>
<dbReference type="GO" id="GO:0016301">
    <property type="term" value="F:kinase activity"/>
    <property type="evidence" value="ECO:0007669"/>
    <property type="project" value="UniProtKB-KW"/>
</dbReference>
<dbReference type="GO" id="GO:0000287">
    <property type="term" value="F:magnesium ion binding"/>
    <property type="evidence" value="ECO:0007669"/>
    <property type="project" value="UniProtKB-UniRule"/>
</dbReference>
<dbReference type="GO" id="GO:0004749">
    <property type="term" value="F:ribose phosphate diphosphokinase activity"/>
    <property type="evidence" value="ECO:0007669"/>
    <property type="project" value="UniProtKB-UniRule"/>
</dbReference>
<dbReference type="GO" id="GO:0006015">
    <property type="term" value="P:5-phosphoribose 1-diphosphate biosynthetic process"/>
    <property type="evidence" value="ECO:0007669"/>
    <property type="project" value="UniProtKB-UniRule"/>
</dbReference>
<dbReference type="GO" id="GO:0006164">
    <property type="term" value="P:purine nucleotide biosynthetic process"/>
    <property type="evidence" value="ECO:0007669"/>
    <property type="project" value="TreeGrafter"/>
</dbReference>
<dbReference type="GO" id="GO:0009156">
    <property type="term" value="P:ribonucleoside monophosphate biosynthetic process"/>
    <property type="evidence" value="ECO:0007669"/>
    <property type="project" value="InterPro"/>
</dbReference>
<dbReference type="CDD" id="cd06223">
    <property type="entry name" value="PRTases_typeI"/>
    <property type="match status" value="1"/>
</dbReference>
<dbReference type="FunFam" id="3.40.50.2020:FF:000001">
    <property type="entry name" value="Ribose-phosphate pyrophosphokinase"/>
    <property type="match status" value="1"/>
</dbReference>
<dbReference type="Gene3D" id="3.40.50.2020">
    <property type="match status" value="2"/>
</dbReference>
<dbReference type="HAMAP" id="MF_00583_B">
    <property type="entry name" value="RibP_PPkinase_B"/>
    <property type="match status" value="1"/>
</dbReference>
<dbReference type="InterPro" id="IPR000842">
    <property type="entry name" value="PRib_PP_synth_CS"/>
</dbReference>
<dbReference type="InterPro" id="IPR029099">
    <property type="entry name" value="Pribosyltran_N"/>
</dbReference>
<dbReference type="InterPro" id="IPR000836">
    <property type="entry name" value="PRibTrfase_dom"/>
</dbReference>
<dbReference type="InterPro" id="IPR029057">
    <property type="entry name" value="PRTase-like"/>
</dbReference>
<dbReference type="InterPro" id="IPR005946">
    <property type="entry name" value="Rib-P_diPkinase"/>
</dbReference>
<dbReference type="InterPro" id="IPR037515">
    <property type="entry name" value="Rib-P_diPkinase_bac"/>
</dbReference>
<dbReference type="NCBIfam" id="NF002320">
    <property type="entry name" value="PRK01259.1"/>
    <property type="match status" value="1"/>
</dbReference>
<dbReference type="NCBIfam" id="TIGR01251">
    <property type="entry name" value="ribP_PPkin"/>
    <property type="match status" value="1"/>
</dbReference>
<dbReference type="PANTHER" id="PTHR10210">
    <property type="entry name" value="RIBOSE-PHOSPHATE DIPHOSPHOKINASE FAMILY MEMBER"/>
    <property type="match status" value="1"/>
</dbReference>
<dbReference type="PANTHER" id="PTHR10210:SF41">
    <property type="entry name" value="RIBOSE-PHOSPHATE PYROPHOSPHOKINASE 1, CHLOROPLASTIC"/>
    <property type="match status" value="1"/>
</dbReference>
<dbReference type="Pfam" id="PF14572">
    <property type="entry name" value="Pribosyl_synth"/>
    <property type="match status" value="1"/>
</dbReference>
<dbReference type="Pfam" id="PF13793">
    <property type="entry name" value="Pribosyltran_N"/>
    <property type="match status" value="1"/>
</dbReference>
<dbReference type="SMART" id="SM01400">
    <property type="entry name" value="Pribosyltran_N"/>
    <property type="match status" value="1"/>
</dbReference>
<dbReference type="SUPFAM" id="SSF53271">
    <property type="entry name" value="PRTase-like"/>
    <property type="match status" value="1"/>
</dbReference>
<dbReference type="PROSITE" id="PS00114">
    <property type="entry name" value="PRPP_SYNTHASE"/>
    <property type="match status" value="1"/>
</dbReference>
<organism>
    <name type="scientific">Vibrio vulnificus (strain YJ016)</name>
    <dbReference type="NCBI Taxonomy" id="196600"/>
    <lineage>
        <taxon>Bacteria</taxon>
        <taxon>Pseudomonadati</taxon>
        <taxon>Pseudomonadota</taxon>
        <taxon>Gammaproteobacteria</taxon>
        <taxon>Vibrionales</taxon>
        <taxon>Vibrionaceae</taxon>
        <taxon>Vibrio</taxon>
    </lineage>
</organism>
<proteinExistence type="inferred from homology"/>
<feature type="chain" id="PRO_0000141225" description="Ribose-phosphate pyrophosphokinase">
    <location>
        <begin position="1"/>
        <end position="314"/>
    </location>
</feature>
<feature type="active site" evidence="1">
    <location>
        <position position="194"/>
    </location>
</feature>
<feature type="binding site" evidence="1">
    <location>
        <begin position="37"/>
        <end position="39"/>
    </location>
    <ligand>
        <name>ATP</name>
        <dbReference type="ChEBI" id="CHEBI:30616"/>
    </ligand>
</feature>
<feature type="binding site" evidence="1">
    <location>
        <begin position="96"/>
        <end position="97"/>
    </location>
    <ligand>
        <name>ATP</name>
        <dbReference type="ChEBI" id="CHEBI:30616"/>
    </ligand>
</feature>
<feature type="binding site" evidence="1">
    <location>
        <position position="131"/>
    </location>
    <ligand>
        <name>Mg(2+)</name>
        <dbReference type="ChEBI" id="CHEBI:18420"/>
        <label>1</label>
    </ligand>
</feature>
<feature type="binding site" evidence="1">
    <location>
        <position position="170"/>
    </location>
    <ligand>
        <name>Mg(2+)</name>
        <dbReference type="ChEBI" id="CHEBI:18420"/>
        <label>2</label>
    </ligand>
</feature>
<feature type="binding site" evidence="1">
    <location>
        <position position="196"/>
    </location>
    <ligand>
        <name>D-ribose 5-phosphate</name>
        <dbReference type="ChEBI" id="CHEBI:78346"/>
    </ligand>
</feature>
<feature type="binding site" evidence="1">
    <location>
        <position position="220"/>
    </location>
    <ligand>
        <name>D-ribose 5-phosphate</name>
        <dbReference type="ChEBI" id="CHEBI:78346"/>
    </ligand>
</feature>
<feature type="binding site" evidence="1">
    <location>
        <begin position="224"/>
        <end position="228"/>
    </location>
    <ligand>
        <name>D-ribose 5-phosphate</name>
        <dbReference type="ChEBI" id="CHEBI:78346"/>
    </ligand>
</feature>
<evidence type="ECO:0000255" key="1">
    <source>
        <dbReference type="HAMAP-Rule" id="MF_00583"/>
    </source>
</evidence>
<keyword id="KW-0067">ATP-binding</keyword>
<keyword id="KW-0963">Cytoplasm</keyword>
<keyword id="KW-0418">Kinase</keyword>
<keyword id="KW-0460">Magnesium</keyword>
<keyword id="KW-0479">Metal-binding</keyword>
<keyword id="KW-0545">Nucleotide biosynthesis</keyword>
<keyword id="KW-0547">Nucleotide-binding</keyword>
<keyword id="KW-0808">Transferase</keyword>
<sequence length="314" mass="33924">MPDMKLFAGNATPELAQRIADRLYISLGDATVSRFSDGEVAVQINENVRGSDVFIIQSTCAPTNDNLMELVVMIDAMRRASAGRITAVIPYFGYARQDRRVRSARVPITAKVVADFLSNVGVDRVLTIDLHAEQIQGFFDVPVDNIFGTPVLLEDMHARGLEDPVVVSPDLGGVVRARATAKALGDIDIAIVDKRRPRANVSEVMNLIGDVEGRDCVIVDDMIDTGGTLCKAAEALKERGAKRVFAYATHAVFSGNAAKNIKNSVLDQVIVTDSITLSKEMAATGKVTQLTLSGMLAEAIRRISNEESISAMFN</sequence>
<gene>
    <name evidence="1" type="primary">prs</name>
    <name type="ordered locus">VV0926</name>
</gene>
<accession>Q7MMZ1</accession>
<name>KPRS_VIBVY</name>
<reference key="1">
    <citation type="journal article" date="2003" name="Genome Res.">
        <title>Comparative genome analysis of Vibrio vulnificus, a marine pathogen.</title>
        <authorList>
            <person name="Chen C.-Y."/>
            <person name="Wu K.-M."/>
            <person name="Chang Y.-C."/>
            <person name="Chang C.-H."/>
            <person name="Tsai H.-C."/>
            <person name="Liao T.-L."/>
            <person name="Liu Y.-M."/>
            <person name="Chen H.-J."/>
            <person name="Shen A.B.-T."/>
            <person name="Li J.-C."/>
            <person name="Su T.-L."/>
            <person name="Shao C.-P."/>
            <person name="Lee C.-T."/>
            <person name="Hor L.-I."/>
            <person name="Tsai S.-F."/>
        </authorList>
    </citation>
    <scope>NUCLEOTIDE SEQUENCE [LARGE SCALE GENOMIC DNA]</scope>
    <source>
        <strain>YJ016</strain>
    </source>
</reference>